<protein>
    <recommendedName>
        <fullName>Homeobox protein notochord</fullName>
    </recommendedName>
</protein>
<reference key="1">
    <citation type="journal article" date="2004" name="Nat. Genet.">
        <title>Complete sequencing and characterization of 21,243 full-length human cDNAs.</title>
        <authorList>
            <person name="Ota T."/>
            <person name="Suzuki Y."/>
            <person name="Nishikawa T."/>
            <person name="Otsuki T."/>
            <person name="Sugiyama T."/>
            <person name="Irie R."/>
            <person name="Wakamatsu A."/>
            <person name="Hayashi K."/>
            <person name="Sato H."/>
            <person name="Nagai K."/>
            <person name="Kimura K."/>
            <person name="Makita H."/>
            <person name="Sekine M."/>
            <person name="Obayashi M."/>
            <person name="Nishi T."/>
            <person name="Shibahara T."/>
            <person name="Tanaka T."/>
            <person name="Ishii S."/>
            <person name="Yamamoto J."/>
            <person name="Saito K."/>
            <person name="Kawai Y."/>
            <person name="Isono Y."/>
            <person name="Nakamura Y."/>
            <person name="Nagahari K."/>
            <person name="Murakami K."/>
            <person name="Yasuda T."/>
            <person name="Iwayanagi T."/>
            <person name="Wagatsuma M."/>
            <person name="Shiratori A."/>
            <person name="Sudo H."/>
            <person name="Hosoiri T."/>
            <person name="Kaku Y."/>
            <person name="Kodaira H."/>
            <person name="Kondo H."/>
            <person name="Sugawara M."/>
            <person name="Takahashi M."/>
            <person name="Kanda K."/>
            <person name="Yokoi T."/>
            <person name="Furuya T."/>
            <person name="Kikkawa E."/>
            <person name="Omura Y."/>
            <person name="Abe K."/>
            <person name="Kamihara K."/>
            <person name="Katsuta N."/>
            <person name="Sato K."/>
            <person name="Tanikawa M."/>
            <person name="Yamazaki M."/>
            <person name="Ninomiya K."/>
            <person name="Ishibashi T."/>
            <person name="Yamashita H."/>
            <person name="Murakawa K."/>
            <person name="Fujimori K."/>
            <person name="Tanai H."/>
            <person name="Kimata M."/>
            <person name="Watanabe M."/>
            <person name="Hiraoka S."/>
            <person name="Chiba Y."/>
            <person name="Ishida S."/>
            <person name="Ono Y."/>
            <person name="Takiguchi S."/>
            <person name="Watanabe S."/>
            <person name="Yosida M."/>
            <person name="Hotuta T."/>
            <person name="Kusano J."/>
            <person name="Kanehori K."/>
            <person name="Takahashi-Fujii A."/>
            <person name="Hara H."/>
            <person name="Tanase T.-O."/>
            <person name="Nomura Y."/>
            <person name="Togiya S."/>
            <person name="Komai F."/>
            <person name="Hara R."/>
            <person name="Takeuchi K."/>
            <person name="Arita M."/>
            <person name="Imose N."/>
            <person name="Musashino K."/>
            <person name="Yuuki H."/>
            <person name="Oshima A."/>
            <person name="Sasaki N."/>
            <person name="Aotsuka S."/>
            <person name="Yoshikawa Y."/>
            <person name="Matsunawa H."/>
            <person name="Ichihara T."/>
            <person name="Shiohata N."/>
            <person name="Sano S."/>
            <person name="Moriya S."/>
            <person name="Momiyama H."/>
            <person name="Satoh N."/>
            <person name="Takami S."/>
            <person name="Terashima Y."/>
            <person name="Suzuki O."/>
            <person name="Nakagawa S."/>
            <person name="Senoh A."/>
            <person name="Mizoguchi H."/>
            <person name="Goto Y."/>
            <person name="Shimizu F."/>
            <person name="Wakebe H."/>
            <person name="Hishigaki H."/>
            <person name="Watanabe T."/>
            <person name="Sugiyama A."/>
            <person name="Takemoto M."/>
            <person name="Kawakami B."/>
            <person name="Yamazaki M."/>
            <person name="Watanabe K."/>
            <person name="Kumagai A."/>
            <person name="Itakura S."/>
            <person name="Fukuzumi Y."/>
            <person name="Fujimori Y."/>
            <person name="Komiyama M."/>
            <person name="Tashiro H."/>
            <person name="Tanigami A."/>
            <person name="Fujiwara T."/>
            <person name="Ono T."/>
            <person name="Yamada K."/>
            <person name="Fujii Y."/>
            <person name="Ozaki K."/>
            <person name="Hirao M."/>
            <person name="Ohmori Y."/>
            <person name="Kawabata A."/>
            <person name="Hikiji T."/>
            <person name="Kobatake N."/>
            <person name="Inagaki H."/>
            <person name="Ikema Y."/>
            <person name="Okamoto S."/>
            <person name="Okitani R."/>
            <person name="Kawakami T."/>
            <person name="Noguchi S."/>
            <person name="Itoh T."/>
            <person name="Shigeta K."/>
            <person name="Senba T."/>
            <person name="Matsumura K."/>
            <person name="Nakajima Y."/>
            <person name="Mizuno T."/>
            <person name="Morinaga M."/>
            <person name="Sasaki M."/>
            <person name="Togashi T."/>
            <person name="Oyama M."/>
            <person name="Hata H."/>
            <person name="Watanabe M."/>
            <person name="Komatsu T."/>
            <person name="Mizushima-Sugano J."/>
            <person name="Satoh T."/>
            <person name="Shirai Y."/>
            <person name="Takahashi Y."/>
            <person name="Nakagawa K."/>
            <person name="Okumura K."/>
            <person name="Nagase T."/>
            <person name="Nomura N."/>
            <person name="Kikuchi H."/>
            <person name="Masuho Y."/>
            <person name="Yamashita R."/>
            <person name="Nakai K."/>
            <person name="Yada T."/>
            <person name="Nakamura Y."/>
            <person name="Ohara O."/>
            <person name="Isogai T."/>
            <person name="Sugano S."/>
        </authorList>
    </citation>
    <scope>NUCLEOTIDE SEQUENCE [LARGE SCALE MRNA]</scope>
    <source>
        <tissue>Substantia nigra</tissue>
        <tissue>Testis</tissue>
    </source>
</reference>
<reference key="2">
    <citation type="journal article" date="2005" name="Nature">
        <title>Generation and annotation of the DNA sequences of human chromosomes 2 and 4.</title>
        <authorList>
            <person name="Hillier L.W."/>
            <person name="Graves T.A."/>
            <person name="Fulton R.S."/>
            <person name="Fulton L.A."/>
            <person name="Pepin K.H."/>
            <person name="Minx P."/>
            <person name="Wagner-McPherson C."/>
            <person name="Layman D."/>
            <person name="Wylie K."/>
            <person name="Sekhon M."/>
            <person name="Becker M.C."/>
            <person name="Fewell G.A."/>
            <person name="Delehaunty K.D."/>
            <person name="Miner T.L."/>
            <person name="Nash W.E."/>
            <person name="Kremitzki C."/>
            <person name="Oddy L."/>
            <person name="Du H."/>
            <person name="Sun H."/>
            <person name="Bradshaw-Cordum H."/>
            <person name="Ali J."/>
            <person name="Carter J."/>
            <person name="Cordes M."/>
            <person name="Harris A."/>
            <person name="Isak A."/>
            <person name="van Brunt A."/>
            <person name="Nguyen C."/>
            <person name="Du F."/>
            <person name="Courtney L."/>
            <person name="Kalicki J."/>
            <person name="Ozersky P."/>
            <person name="Abbott S."/>
            <person name="Armstrong J."/>
            <person name="Belter E.A."/>
            <person name="Caruso L."/>
            <person name="Cedroni M."/>
            <person name="Cotton M."/>
            <person name="Davidson T."/>
            <person name="Desai A."/>
            <person name="Elliott G."/>
            <person name="Erb T."/>
            <person name="Fronick C."/>
            <person name="Gaige T."/>
            <person name="Haakenson W."/>
            <person name="Haglund K."/>
            <person name="Holmes A."/>
            <person name="Harkins R."/>
            <person name="Kim K."/>
            <person name="Kruchowski S.S."/>
            <person name="Strong C.M."/>
            <person name="Grewal N."/>
            <person name="Goyea E."/>
            <person name="Hou S."/>
            <person name="Levy A."/>
            <person name="Martinka S."/>
            <person name="Mead K."/>
            <person name="McLellan M.D."/>
            <person name="Meyer R."/>
            <person name="Randall-Maher J."/>
            <person name="Tomlinson C."/>
            <person name="Dauphin-Kohlberg S."/>
            <person name="Kozlowicz-Reilly A."/>
            <person name="Shah N."/>
            <person name="Swearengen-Shahid S."/>
            <person name="Snider J."/>
            <person name="Strong J.T."/>
            <person name="Thompson J."/>
            <person name="Yoakum M."/>
            <person name="Leonard S."/>
            <person name="Pearman C."/>
            <person name="Trani L."/>
            <person name="Radionenko M."/>
            <person name="Waligorski J.E."/>
            <person name="Wang C."/>
            <person name="Rock S.M."/>
            <person name="Tin-Wollam A.-M."/>
            <person name="Maupin R."/>
            <person name="Latreille P."/>
            <person name="Wendl M.C."/>
            <person name="Yang S.-P."/>
            <person name="Pohl C."/>
            <person name="Wallis J.W."/>
            <person name="Spieth J."/>
            <person name="Bieri T.A."/>
            <person name="Berkowicz N."/>
            <person name="Nelson J.O."/>
            <person name="Osborne J."/>
            <person name="Ding L."/>
            <person name="Meyer R."/>
            <person name="Sabo A."/>
            <person name="Shotland Y."/>
            <person name="Sinha P."/>
            <person name="Wohldmann P.E."/>
            <person name="Cook L.L."/>
            <person name="Hickenbotham M.T."/>
            <person name="Eldred J."/>
            <person name="Williams D."/>
            <person name="Jones T.A."/>
            <person name="She X."/>
            <person name="Ciccarelli F.D."/>
            <person name="Izaurralde E."/>
            <person name="Taylor J."/>
            <person name="Schmutz J."/>
            <person name="Myers R.M."/>
            <person name="Cox D.R."/>
            <person name="Huang X."/>
            <person name="McPherson J.D."/>
            <person name="Mardis E.R."/>
            <person name="Clifton S.W."/>
            <person name="Warren W.C."/>
            <person name="Chinwalla A.T."/>
            <person name="Eddy S.R."/>
            <person name="Marra M.A."/>
            <person name="Ovcharenko I."/>
            <person name="Furey T.S."/>
            <person name="Miller W."/>
            <person name="Eichler E.E."/>
            <person name="Bork P."/>
            <person name="Suyama M."/>
            <person name="Torrents D."/>
            <person name="Waterston R.H."/>
            <person name="Wilson R.K."/>
        </authorList>
    </citation>
    <scope>NUCLEOTIDE SEQUENCE [LARGE SCALE GENOMIC DNA]</scope>
</reference>
<proteinExistence type="evidence at protein level"/>
<feature type="chain" id="PRO_0000343223" description="Homeobox protein notochord">
    <location>
        <begin position="1"/>
        <end position="251"/>
    </location>
</feature>
<feature type="DNA-binding region" description="Homeobox" evidence="2">
    <location>
        <begin position="156"/>
        <end position="215"/>
    </location>
</feature>
<feature type="region of interest" description="Disordered" evidence="3">
    <location>
        <begin position="1"/>
        <end position="47"/>
    </location>
</feature>
<feature type="region of interest" description="Disordered" evidence="3">
    <location>
        <begin position="224"/>
        <end position="251"/>
    </location>
</feature>
<feature type="compositionally biased region" description="Pro residues" evidence="3">
    <location>
        <begin position="1"/>
        <end position="14"/>
    </location>
</feature>
<feature type="compositionally biased region" description="Low complexity" evidence="3">
    <location>
        <begin position="15"/>
        <end position="35"/>
    </location>
</feature>
<feature type="compositionally biased region" description="Low complexity" evidence="3">
    <location>
        <begin position="224"/>
        <end position="242"/>
    </location>
</feature>
<feature type="sequence variant" id="VAR_059353" description="In dbSNP:rs1864492.">
    <original>R</original>
    <variation>T</variation>
    <location>
        <position position="5"/>
    </location>
</feature>
<feature type="sequence variant" id="VAR_059354" description="In dbSNP:rs13418681.">
    <original>N</original>
    <variation>K</variation>
    <location>
        <position position="164"/>
    </location>
</feature>
<gene>
    <name type="primary">NOTO</name>
</gene>
<comment type="function">
    <text evidence="1">Transcription regulator acting downstream of both FOXA2 and Brachyury (T) during notochord development. Required for node morphogenesis. Is essential for cilia formation in the posterior notochord (PNC) and for left-right patterning; acts upstream of FOXJ1 and RFX3 in this process and is required for the expression of various components important for axonemal assembly and function. Plays a role in regulating axial versus paraxial cell fate. Activates the transcription of ciliary proteins C11orf97 homolog, FAM183B and SPACA9 in the embryonic ventral node (By similarity).</text>
</comment>
<comment type="interaction">
    <interactant intactId="EBI-17490746">
        <id>A8MTQ0</id>
    </interactant>
    <interactant intactId="EBI-17183751">
        <id>X5D778</id>
        <label>ANKRD11</label>
    </interactant>
    <organismsDiffer>false</organismsDiffer>
    <experiments>3</experiments>
</comment>
<comment type="interaction">
    <interactant intactId="EBI-17490746">
        <id>A8MTQ0</id>
    </interactant>
    <interactant intactId="EBI-12819523">
        <id>P41238</id>
        <label>APOBEC1</label>
    </interactant>
    <organismsDiffer>false</organismsDiffer>
    <experiments>3</experiments>
</comment>
<comment type="interaction">
    <interactant intactId="EBI-17490746">
        <id>A8MTQ0</id>
    </interactant>
    <interactant intactId="EBI-747185">
        <id>O95817</id>
        <label>BAG3</label>
    </interactant>
    <organismsDiffer>false</organismsDiffer>
    <experiments>3</experiments>
</comment>
<comment type="interaction">
    <interactant intactId="EBI-17490746">
        <id>A8MTQ0</id>
    </interactant>
    <interactant intactId="EBI-11524452">
        <id>Q8N9N5-2</id>
        <label>BANP</label>
    </interactant>
    <organismsDiffer>false</organismsDiffer>
    <experiments>3</experiments>
</comment>
<comment type="interaction">
    <interactant intactId="EBI-17490746">
        <id>A8MTQ0</id>
    </interactant>
    <interactant intactId="EBI-1054703">
        <id>P20290-2</id>
        <label>BTF3</label>
    </interactant>
    <organismsDiffer>false</organismsDiffer>
    <experiments>3</experiments>
</comment>
<comment type="interaction">
    <interactant intactId="EBI-17490746">
        <id>A8MTQ0</id>
    </interactant>
    <interactant intactId="EBI-744556">
        <id>Q96HB5</id>
        <label>CCDC120</label>
    </interactant>
    <organismsDiffer>false</organismsDiffer>
    <experiments>3</experiments>
</comment>
<comment type="interaction">
    <interactant intactId="EBI-17490746">
        <id>A8MTQ0</id>
    </interactant>
    <interactant intactId="EBI-741885">
        <id>Q96LK0</id>
        <label>CEP19</label>
    </interactant>
    <organismsDiffer>false</organismsDiffer>
    <experiments>3</experiments>
</comment>
<comment type="interaction">
    <interactant intactId="EBI-17490746">
        <id>A8MTQ0</id>
    </interactant>
    <interactant intactId="EBI-1020839">
        <id>Q13111</id>
        <label>CHAF1A</label>
    </interactant>
    <organismsDiffer>false</organismsDiffer>
    <experiments>3</experiments>
</comment>
<comment type="interaction">
    <interactant intactId="EBI-17490746">
        <id>A8MTQ0</id>
    </interactant>
    <interactant intactId="EBI-1055422">
        <id>Q53HC9</id>
        <label>EIPR1</label>
    </interactant>
    <organismsDiffer>false</organismsDiffer>
    <experiments>3</experiments>
</comment>
<comment type="interaction">
    <interactant intactId="EBI-17490746">
        <id>A8MTQ0</id>
    </interactant>
    <interactant intactId="EBI-17491518">
        <id>Q6ZN32</id>
        <label>ETV3L</label>
    </interactant>
    <organismsDiffer>false</organismsDiffer>
    <experiments>3</experiments>
</comment>
<comment type="interaction">
    <interactant intactId="EBI-17490746">
        <id>A8MTQ0</id>
    </interactant>
    <interactant intactId="EBI-10175124">
        <id>Q8IZU0</id>
        <label>FAM9B</label>
    </interactant>
    <organismsDiffer>false</organismsDiffer>
    <experiments>3</experiments>
</comment>
<comment type="interaction">
    <interactant intactId="EBI-17490746">
        <id>A8MTQ0</id>
    </interactant>
    <interactant intactId="EBI-17282008">
        <id>O60548</id>
        <label>FOXD2</label>
    </interactant>
    <organismsDiffer>false</organismsDiffer>
    <experiments>3</experiments>
</comment>
<comment type="interaction">
    <interactant intactId="EBI-17490746">
        <id>A8MTQ0</id>
    </interactant>
    <interactant intactId="EBI-1759806">
        <id>O75593</id>
        <label>FOXH1</label>
    </interactant>
    <organismsDiffer>false</organismsDiffer>
    <experiments>3</experiments>
</comment>
<comment type="interaction">
    <interactant intactId="EBI-17490746">
        <id>A8MTQ0</id>
    </interactant>
    <interactant intactId="EBI-748515">
        <id>Q8IVS8</id>
        <label>GLYCTK</label>
    </interactant>
    <organismsDiffer>false</organismsDiffer>
    <experiments>3</experiments>
</comment>
<comment type="interaction">
    <interactant intactId="EBI-17490746">
        <id>A8MTQ0</id>
    </interactant>
    <interactant intactId="EBI-7060731">
        <id>P61978-2</id>
        <label>HNRNPK</label>
    </interactant>
    <organismsDiffer>false</organismsDiffer>
    <experiments>3</experiments>
</comment>
<comment type="interaction">
    <interactant intactId="EBI-17490746">
        <id>A8MTQ0</id>
    </interactant>
    <interactant intactId="EBI-10990676">
        <id>Q96PC2</id>
        <label>IP6K3</label>
    </interactant>
    <organismsDiffer>false</organismsDiffer>
    <experiments>3</experiments>
</comment>
<comment type="interaction">
    <interactant intactId="EBI-17490746">
        <id>A8MTQ0</id>
    </interactant>
    <interactant intactId="EBI-1047093">
        <id>O76011</id>
        <label>KRT34</label>
    </interactant>
    <organismsDiffer>false</organismsDiffer>
    <experiments>3</experiments>
</comment>
<comment type="interaction">
    <interactant intactId="EBI-17490746">
        <id>A8MTQ0</id>
    </interactant>
    <interactant intactId="EBI-10241353">
        <id>Q3SYF9</id>
        <label>KRTAP19-7</label>
    </interactant>
    <organismsDiffer>false</organismsDiffer>
    <experiments>3</experiments>
</comment>
<comment type="interaction">
    <interactant intactId="EBI-17490746">
        <id>A8MTQ0</id>
    </interactant>
    <interactant intactId="EBI-10250562">
        <id>Q6L8G9</id>
        <label>KRTAP5-6</label>
    </interactant>
    <organismsDiffer>false</organismsDiffer>
    <experiments>3</experiments>
</comment>
<comment type="interaction">
    <interactant intactId="EBI-17490746">
        <id>A8MTQ0</id>
    </interactant>
    <interactant intactId="EBI-12111050">
        <id>Q3LI64</id>
        <label>KRTAP6-1</label>
    </interactant>
    <organismsDiffer>false</organismsDiffer>
    <experiments>3</experiments>
</comment>
<comment type="interaction">
    <interactant intactId="EBI-17490746">
        <id>A8MTQ0</id>
    </interactant>
    <interactant intactId="EBI-22311199">
        <id>Q3LI67</id>
        <label>KRTAP6-3</label>
    </interactant>
    <organismsDiffer>false</organismsDiffer>
    <experiments>3</experiments>
</comment>
<comment type="interaction">
    <interactant intactId="EBI-17490746">
        <id>A8MTQ0</id>
    </interactant>
    <interactant intactId="EBI-747813">
        <id>Q5SW96</id>
        <label>LDLRAP1</label>
    </interactant>
    <organismsDiffer>false</organismsDiffer>
    <experiments>3</experiments>
</comment>
<comment type="interaction">
    <interactant intactId="EBI-17490746">
        <id>A8MTQ0</id>
    </interactant>
    <interactant intactId="EBI-2830349">
        <id>Q7Z4F1</id>
        <label>LRP10</label>
    </interactant>
    <organismsDiffer>false</organismsDiffer>
    <experiments>3</experiments>
</comment>
<comment type="interaction">
    <interactant intactId="EBI-17490746">
        <id>A8MTQ0</id>
    </interactant>
    <interactant intactId="EBI-716006">
        <id>Q9Y5V3</id>
        <label>MAGED1</label>
    </interactant>
    <organismsDiffer>false</organismsDiffer>
    <experiments>3</experiments>
</comment>
<comment type="interaction">
    <interactant intactId="EBI-17490746">
        <id>A8MTQ0</id>
    </interactant>
    <interactant intactId="EBI-8025850">
        <id>O14770-4</id>
        <label>MEIS2</label>
    </interactant>
    <organismsDiffer>false</organismsDiffer>
    <experiments>3</experiments>
</comment>
<comment type="interaction">
    <interactant intactId="EBI-17490746">
        <id>A8MTQ0</id>
    </interactant>
    <interactant intactId="EBI-9995757">
        <id>Q9H2Z4</id>
        <label>NKX2-4</label>
    </interactant>
    <organismsDiffer>false</organismsDiffer>
    <experiments>3</experiments>
</comment>
<comment type="interaction">
    <interactant intactId="EBI-17490746">
        <id>A8MTQ0</id>
    </interactant>
    <interactant intactId="EBI-10232538">
        <id>Q8WWB5</id>
        <label>PIH1D2</label>
    </interactant>
    <organismsDiffer>false</organismsDiffer>
    <experiments>3</experiments>
</comment>
<comment type="interaction">
    <interactant intactId="EBI-17490746">
        <id>A8MTQ0</id>
    </interactant>
    <interactant intactId="EBI-17236143">
        <id>Q12837</id>
        <label>POU4F2</label>
    </interactant>
    <organismsDiffer>false</organismsDiffer>
    <experiments>3</experiments>
</comment>
<comment type="interaction">
    <interactant intactId="EBI-17490746">
        <id>A8MTQ0</id>
    </interactant>
    <interactant intactId="EBI-17181801">
        <id>P0C264</id>
        <label>SBK3</label>
    </interactant>
    <organismsDiffer>false</organismsDiffer>
    <experiments>3</experiments>
</comment>
<comment type="interaction">
    <interactant intactId="EBI-17490746">
        <id>A8MTQ0</id>
    </interactant>
    <interactant intactId="EBI-9090990">
        <id>Q5W5X9-3</id>
        <label>TTC23</label>
    </interactant>
    <organismsDiffer>false</organismsDiffer>
    <experiments>3</experiments>
</comment>
<comment type="interaction">
    <interactant intactId="EBI-17490746">
        <id>A8MTQ0</id>
    </interactant>
    <interactant intactId="EBI-17208936">
        <id>P0CB47</id>
        <label>UBTFL1</label>
    </interactant>
    <organismsDiffer>false</organismsDiffer>
    <experiments>3</experiments>
</comment>
<comment type="interaction">
    <interactant intactId="EBI-17490746">
        <id>A8MTQ0</id>
    </interactant>
    <interactant intactId="EBI-25475877">
        <id>PRO_0000449627</id>
        <label>rep</label>
        <dbReference type="UniProtKB" id="P0DTD1"/>
    </interactant>
    <organismsDiffer>true</organismsDiffer>
    <experiments>3</experiments>
</comment>
<comment type="interaction">
    <interactant intactId="EBI-17490746">
        <id>A8MTQ0</id>
    </interactant>
    <interactant intactId="EBI-25475920">
        <id>PRO_0000449631</id>
        <label>rep</label>
        <dbReference type="UniProtKB" id="P0DTD1"/>
    </interactant>
    <organismsDiffer>true</organismsDiffer>
    <experiments>3</experiments>
</comment>
<comment type="interaction">
    <interactant intactId="EBI-17490746">
        <id>A8MTQ0</id>
    </interactant>
    <interactant intactId="EBI-25492395">
        <id>PRO_0000449633</id>
        <label>rep</label>
        <dbReference type="UniProtKB" id="P0DTD1"/>
    </interactant>
    <organismsDiffer>true</organismsDiffer>
    <experiments>3</experiments>
</comment>
<comment type="subcellular location">
    <subcellularLocation>
        <location evidence="2">Nucleus</location>
    </subcellularLocation>
</comment>
<accession>A8MTQ0</accession>
<accession>B4DJ59</accession>
<accession>B7ZAU5</accession>
<name>NOTO_HUMAN</name>
<organism>
    <name type="scientific">Homo sapiens</name>
    <name type="common">Human</name>
    <dbReference type="NCBI Taxonomy" id="9606"/>
    <lineage>
        <taxon>Eukaryota</taxon>
        <taxon>Metazoa</taxon>
        <taxon>Chordata</taxon>
        <taxon>Craniata</taxon>
        <taxon>Vertebrata</taxon>
        <taxon>Euteleostomi</taxon>
        <taxon>Mammalia</taxon>
        <taxon>Eutheria</taxon>
        <taxon>Euarchontoglires</taxon>
        <taxon>Primates</taxon>
        <taxon>Haplorrhini</taxon>
        <taxon>Catarrhini</taxon>
        <taxon>Hominidae</taxon>
        <taxon>Homo</taxon>
    </lineage>
</organism>
<sequence length="251" mass="27003">MPSPRPRGSPPPAPSGSRVRPPRSGRSPAPRSPTGPNTPRAPGRFESPFSVEAILARPDPCAPAASQPSGSACVHPAFWTAASLCATGGLPWACPTSWLPAYLSVGFYPVPGPRVAPVCGLLGFGVTGLELAHCSGLWAFPDWAPTEDLQDTERQQKRVRTMFNLEQLEELEKVFAKQHNLVGKKRAQLAARLKLTENQVRVWFQNRRVKYQKQQKLRAAVTSAEAASLDEPSSSSIASIQSDDAESGVDG</sequence>
<dbReference type="EMBL" id="AK295936">
    <property type="protein sequence ID" value="BAG58721.1"/>
    <property type="molecule type" value="mRNA"/>
</dbReference>
<dbReference type="EMBL" id="AK316410">
    <property type="protein sequence ID" value="BAH14781.1"/>
    <property type="molecule type" value="mRNA"/>
</dbReference>
<dbReference type="EMBL" id="AC010913">
    <property type="status" value="NOT_ANNOTATED_CDS"/>
    <property type="molecule type" value="Genomic_DNA"/>
</dbReference>
<dbReference type="CCDS" id="CCDS46335.1"/>
<dbReference type="RefSeq" id="NP_001127934.1">
    <property type="nucleotide sequence ID" value="NM_001134462.2"/>
</dbReference>
<dbReference type="SMR" id="A8MTQ0"/>
<dbReference type="BioGRID" id="131286">
    <property type="interactions" value="35"/>
</dbReference>
<dbReference type="FunCoup" id="A8MTQ0">
    <property type="interactions" value="233"/>
</dbReference>
<dbReference type="IntAct" id="A8MTQ0">
    <property type="interactions" value="32"/>
</dbReference>
<dbReference type="STRING" id="9606.ENSP00000381486"/>
<dbReference type="iPTMnet" id="A8MTQ0"/>
<dbReference type="PhosphoSitePlus" id="A8MTQ0"/>
<dbReference type="BioMuta" id="NOTO"/>
<dbReference type="PaxDb" id="9606-ENSP00000381486"/>
<dbReference type="Antibodypedia" id="31317">
    <property type="antibodies" value="29 antibodies from 12 providers"/>
</dbReference>
<dbReference type="DNASU" id="344022"/>
<dbReference type="Ensembl" id="ENST00000398468.4">
    <property type="protein sequence ID" value="ENSP00000381486.3"/>
    <property type="gene ID" value="ENSG00000214513.4"/>
</dbReference>
<dbReference type="GeneID" id="344022"/>
<dbReference type="KEGG" id="hsa:344022"/>
<dbReference type="MANE-Select" id="ENST00000398468.4">
    <property type="protein sequence ID" value="ENSP00000381486.3"/>
    <property type="RefSeq nucleotide sequence ID" value="NM_001134462.2"/>
    <property type="RefSeq protein sequence ID" value="NP_001127934.1"/>
</dbReference>
<dbReference type="UCSC" id="uc010yrd.3">
    <property type="organism name" value="human"/>
</dbReference>
<dbReference type="AGR" id="HGNC:31839"/>
<dbReference type="CTD" id="344022"/>
<dbReference type="GeneCards" id="NOTO"/>
<dbReference type="HGNC" id="HGNC:31839">
    <property type="gene designation" value="NOTO"/>
</dbReference>
<dbReference type="HPA" id="ENSG00000214513">
    <property type="expression patterns" value="Not detected"/>
</dbReference>
<dbReference type="MIM" id="620695">
    <property type="type" value="gene"/>
</dbReference>
<dbReference type="neXtProt" id="NX_A8MTQ0"/>
<dbReference type="OpenTargets" id="ENSG00000214513"/>
<dbReference type="PharmGKB" id="PA134895171"/>
<dbReference type="VEuPathDB" id="HostDB:ENSG00000214513"/>
<dbReference type="eggNOG" id="KOG0843">
    <property type="taxonomic scope" value="Eukaryota"/>
</dbReference>
<dbReference type="GeneTree" id="ENSGT00940000154361"/>
<dbReference type="HOGENOM" id="CLU_1106811_0_0_1"/>
<dbReference type="InParanoid" id="A8MTQ0"/>
<dbReference type="OMA" id="CPATWLP"/>
<dbReference type="OrthoDB" id="6159439at2759"/>
<dbReference type="PAN-GO" id="A8MTQ0">
    <property type="GO annotations" value="6 GO annotations based on evolutionary models"/>
</dbReference>
<dbReference type="PhylomeDB" id="A8MTQ0"/>
<dbReference type="TreeFam" id="TF326858"/>
<dbReference type="PathwayCommons" id="A8MTQ0"/>
<dbReference type="Reactome" id="R-HSA-9796292">
    <property type="pathway name" value="Formation of axial mesoderm"/>
</dbReference>
<dbReference type="SignaLink" id="A8MTQ0"/>
<dbReference type="BioGRID-ORCS" id="344022">
    <property type="hits" value="15 hits in 1165 CRISPR screens"/>
</dbReference>
<dbReference type="GenomeRNAi" id="344022"/>
<dbReference type="Pharos" id="A8MTQ0">
    <property type="development level" value="Tdark"/>
</dbReference>
<dbReference type="PRO" id="PR:A8MTQ0"/>
<dbReference type="Proteomes" id="UP000005640">
    <property type="component" value="Chromosome 2"/>
</dbReference>
<dbReference type="RNAct" id="A8MTQ0">
    <property type="molecule type" value="protein"/>
</dbReference>
<dbReference type="Bgee" id="ENSG00000214513">
    <property type="expression patterns" value="Expressed in duodenum and 3 other cell types or tissues"/>
</dbReference>
<dbReference type="GO" id="GO:0000785">
    <property type="term" value="C:chromatin"/>
    <property type="evidence" value="ECO:0000247"/>
    <property type="project" value="NTNU_SB"/>
</dbReference>
<dbReference type="GO" id="GO:0005634">
    <property type="term" value="C:nucleus"/>
    <property type="evidence" value="ECO:0000318"/>
    <property type="project" value="GO_Central"/>
</dbReference>
<dbReference type="GO" id="GO:0000981">
    <property type="term" value="F:DNA-binding transcription factor activity, RNA polymerase II-specific"/>
    <property type="evidence" value="ECO:0000247"/>
    <property type="project" value="NTNU_SB"/>
</dbReference>
<dbReference type="GO" id="GO:0000978">
    <property type="term" value="F:RNA polymerase II cis-regulatory region sequence-specific DNA binding"/>
    <property type="evidence" value="ECO:0000318"/>
    <property type="project" value="GO_Central"/>
</dbReference>
<dbReference type="GO" id="GO:1990837">
    <property type="term" value="F:sequence-specific double-stranded DNA binding"/>
    <property type="evidence" value="ECO:0000314"/>
    <property type="project" value="ARUK-UCL"/>
</dbReference>
<dbReference type="GO" id="GO:0007420">
    <property type="term" value="P:brain development"/>
    <property type="evidence" value="ECO:0000318"/>
    <property type="project" value="GO_Central"/>
</dbReference>
<dbReference type="GO" id="GO:0007417">
    <property type="term" value="P:central nervous system development"/>
    <property type="evidence" value="ECO:0000318"/>
    <property type="project" value="GO_Central"/>
</dbReference>
<dbReference type="GO" id="GO:0009953">
    <property type="term" value="P:dorsal/ventral pattern formation"/>
    <property type="evidence" value="ECO:0007669"/>
    <property type="project" value="Ensembl"/>
</dbReference>
<dbReference type="GO" id="GO:0009880">
    <property type="term" value="P:embryonic pattern specification"/>
    <property type="evidence" value="ECO:0007669"/>
    <property type="project" value="Ensembl"/>
</dbReference>
<dbReference type="GO" id="GO:0001947">
    <property type="term" value="P:heart looping"/>
    <property type="evidence" value="ECO:0007669"/>
    <property type="project" value="Ensembl"/>
</dbReference>
<dbReference type="GO" id="GO:0044458">
    <property type="term" value="P:motile cilium assembly"/>
    <property type="evidence" value="ECO:0007669"/>
    <property type="project" value="Ensembl"/>
</dbReference>
<dbReference type="GO" id="GO:0030182">
    <property type="term" value="P:neuron differentiation"/>
    <property type="evidence" value="ECO:0000318"/>
    <property type="project" value="GO_Central"/>
</dbReference>
<dbReference type="GO" id="GO:0030903">
    <property type="term" value="P:notochord development"/>
    <property type="evidence" value="ECO:0007669"/>
    <property type="project" value="Ensembl"/>
</dbReference>
<dbReference type="GO" id="GO:1902017">
    <property type="term" value="P:regulation of cilium assembly"/>
    <property type="evidence" value="ECO:0007669"/>
    <property type="project" value="Ensembl"/>
</dbReference>
<dbReference type="GO" id="GO:0006357">
    <property type="term" value="P:regulation of transcription by RNA polymerase II"/>
    <property type="evidence" value="ECO:0000318"/>
    <property type="project" value="GO_Central"/>
</dbReference>
<dbReference type="CDD" id="cd00086">
    <property type="entry name" value="homeodomain"/>
    <property type="match status" value="1"/>
</dbReference>
<dbReference type="FunFam" id="1.10.10.60:FF:000318">
    <property type="entry name" value="homeobox protein notochord"/>
    <property type="match status" value="1"/>
</dbReference>
<dbReference type="Gene3D" id="1.10.10.60">
    <property type="entry name" value="Homeodomain-like"/>
    <property type="match status" value="1"/>
</dbReference>
<dbReference type="InterPro" id="IPR050877">
    <property type="entry name" value="EMX-VAX-Noto_Homeobox_TFs"/>
</dbReference>
<dbReference type="InterPro" id="IPR001356">
    <property type="entry name" value="HD"/>
</dbReference>
<dbReference type="InterPro" id="IPR009057">
    <property type="entry name" value="Homeodomain-like_sf"/>
</dbReference>
<dbReference type="PANTHER" id="PTHR24339">
    <property type="entry name" value="HOMEOBOX PROTEIN EMX-RELATED"/>
    <property type="match status" value="1"/>
</dbReference>
<dbReference type="PANTHER" id="PTHR24339:SF68">
    <property type="entry name" value="HOMEOBOX PROTEIN NOTOCHORD"/>
    <property type="match status" value="1"/>
</dbReference>
<dbReference type="Pfam" id="PF00046">
    <property type="entry name" value="Homeodomain"/>
    <property type="match status" value="1"/>
</dbReference>
<dbReference type="SMART" id="SM00389">
    <property type="entry name" value="HOX"/>
    <property type="match status" value="1"/>
</dbReference>
<dbReference type="SUPFAM" id="SSF46689">
    <property type="entry name" value="Homeodomain-like"/>
    <property type="match status" value="1"/>
</dbReference>
<dbReference type="PROSITE" id="PS50071">
    <property type="entry name" value="HOMEOBOX_2"/>
    <property type="match status" value="1"/>
</dbReference>
<keyword id="KW-0217">Developmental protein</keyword>
<keyword id="KW-0238">DNA-binding</keyword>
<keyword id="KW-0371">Homeobox</keyword>
<keyword id="KW-0539">Nucleus</keyword>
<keyword id="KW-1185">Reference proteome</keyword>
<keyword id="KW-0804">Transcription</keyword>
<keyword id="KW-0805">Transcription regulation</keyword>
<evidence type="ECO:0000250" key="1">
    <source>
        <dbReference type="UniProtKB" id="Q5TIS6"/>
    </source>
</evidence>
<evidence type="ECO:0000255" key="2">
    <source>
        <dbReference type="PROSITE-ProRule" id="PRU00108"/>
    </source>
</evidence>
<evidence type="ECO:0000256" key="3">
    <source>
        <dbReference type="SAM" id="MobiDB-lite"/>
    </source>
</evidence>